<comment type="function">
    <text>Catalyzes the conversion of caffeic acid to ferulic acid and of 5-hydroxyferulic acid to sinapic acid. The resulting products may subsequently be converted to the corresponding alcohols that are incorporated into lignins.</text>
</comment>
<comment type="catalytic activity">
    <reaction>
        <text>(E)-caffeate + S-adenosyl-L-methionine = (E)-ferulate + S-adenosyl-L-homocysteine + H(+)</text>
        <dbReference type="Rhea" id="RHEA:20225"/>
        <dbReference type="ChEBI" id="CHEBI:15378"/>
        <dbReference type="ChEBI" id="CHEBI:29749"/>
        <dbReference type="ChEBI" id="CHEBI:57770"/>
        <dbReference type="ChEBI" id="CHEBI:57856"/>
        <dbReference type="ChEBI" id="CHEBI:59789"/>
        <dbReference type="EC" id="2.1.1.68"/>
    </reaction>
</comment>
<comment type="pathway">
    <text>Aromatic compound metabolism; phenylpropanoid biosynthesis.</text>
</comment>
<comment type="subunit">
    <text evidence="1">Homodimer.</text>
</comment>
<comment type="similarity">
    <text evidence="2">Belongs to the class I-like SAM-binding methyltransferase superfamily. Cation-independent O-methyltransferase family. COMT subfamily.</text>
</comment>
<gene>
    <name type="primary">OMT2</name>
</gene>
<name>COMT2_POPTM</name>
<proteinExistence type="inferred from homology"/>
<organism>
    <name type="scientific">Populus tremuloides</name>
    <name type="common">Quaking aspen</name>
    <dbReference type="NCBI Taxonomy" id="3693"/>
    <lineage>
        <taxon>Eukaryota</taxon>
        <taxon>Viridiplantae</taxon>
        <taxon>Streptophyta</taxon>
        <taxon>Embryophyta</taxon>
        <taxon>Tracheophyta</taxon>
        <taxon>Spermatophyta</taxon>
        <taxon>Magnoliopsida</taxon>
        <taxon>eudicotyledons</taxon>
        <taxon>Gunneridae</taxon>
        <taxon>Pentapetalae</taxon>
        <taxon>rosids</taxon>
        <taxon>fabids</taxon>
        <taxon>Malpighiales</taxon>
        <taxon>Salicaceae</taxon>
        <taxon>Saliceae</taxon>
        <taxon>Populus</taxon>
    </lineage>
</organism>
<dbReference type="EC" id="2.1.1.68"/>
<dbReference type="EMBL" id="U50522">
    <property type="protein sequence ID" value="AAB68049.1"/>
    <property type="molecule type" value="Genomic_DNA"/>
</dbReference>
<dbReference type="PIR" id="T09780">
    <property type="entry name" value="T09780"/>
</dbReference>
<dbReference type="SMR" id="Q41086"/>
<dbReference type="UniPathway" id="UPA00711"/>
<dbReference type="GO" id="GO:0047763">
    <property type="term" value="F:caffeate O-methyltransferase activity"/>
    <property type="evidence" value="ECO:0007669"/>
    <property type="project" value="UniProtKB-EC"/>
</dbReference>
<dbReference type="GO" id="GO:0046983">
    <property type="term" value="F:protein dimerization activity"/>
    <property type="evidence" value="ECO:0007669"/>
    <property type="project" value="InterPro"/>
</dbReference>
<dbReference type="GO" id="GO:0009809">
    <property type="term" value="P:lignin biosynthetic process"/>
    <property type="evidence" value="ECO:0007669"/>
    <property type="project" value="UniProtKB-KW"/>
</dbReference>
<dbReference type="GO" id="GO:0032259">
    <property type="term" value="P:methylation"/>
    <property type="evidence" value="ECO:0007669"/>
    <property type="project" value="UniProtKB-KW"/>
</dbReference>
<dbReference type="CDD" id="cd02440">
    <property type="entry name" value="AdoMet_MTases"/>
    <property type="match status" value="1"/>
</dbReference>
<dbReference type="FunFam" id="1.10.10.10:FF:000357">
    <property type="entry name" value="Caffeic acid 3-O-methyltransferase"/>
    <property type="match status" value="1"/>
</dbReference>
<dbReference type="FunFam" id="3.40.50.150:FF:000061">
    <property type="entry name" value="Caffeic acid O-methyltransferase"/>
    <property type="match status" value="1"/>
</dbReference>
<dbReference type="Gene3D" id="3.40.50.150">
    <property type="entry name" value="Vaccinia Virus protein VP39"/>
    <property type="match status" value="1"/>
</dbReference>
<dbReference type="Gene3D" id="1.10.10.10">
    <property type="entry name" value="Winged helix-like DNA-binding domain superfamily/Winged helix DNA-binding domain"/>
    <property type="match status" value="1"/>
</dbReference>
<dbReference type="InterPro" id="IPR016461">
    <property type="entry name" value="COMT-like"/>
</dbReference>
<dbReference type="InterPro" id="IPR001077">
    <property type="entry name" value="O_MeTrfase_dom"/>
</dbReference>
<dbReference type="InterPro" id="IPR012967">
    <property type="entry name" value="Plant_O-MeTrfase_dimerisation"/>
</dbReference>
<dbReference type="InterPro" id="IPR029063">
    <property type="entry name" value="SAM-dependent_MTases_sf"/>
</dbReference>
<dbReference type="InterPro" id="IPR036388">
    <property type="entry name" value="WH-like_DNA-bd_sf"/>
</dbReference>
<dbReference type="InterPro" id="IPR036390">
    <property type="entry name" value="WH_DNA-bd_sf"/>
</dbReference>
<dbReference type="PANTHER" id="PTHR11746">
    <property type="entry name" value="O-METHYLTRANSFERASE"/>
    <property type="match status" value="1"/>
</dbReference>
<dbReference type="Pfam" id="PF08100">
    <property type="entry name" value="Dimerisation"/>
    <property type="match status" value="1"/>
</dbReference>
<dbReference type="Pfam" id="PF00891">
    <property type="entry name" value="Methyltransf_2"/>
    <property type="match status" value="1"/>
</dbReference>
<dbReference type="PIRSF" id="PIRSF005739">
    <property type="entry name" value="O-mtase"/>
    <property type="match status" value="1"/>
</dbReference>
<dbReference type="SUPFAM" id="SSF53335">
    <property type="entry name" value="S-adenosyl-L-methionine-dependent methyltransferases"/>
    <property type="match status" value="1"/>
</dbReference>
<dbReference type="SUPFAM" id="SSF46785">
    <property type="entry name" value="Winged helix' DNA-binding domain"/>
    <property type="match status" value="1"/>
</dbReference>
<dbReference type="PROSITE" id="PS51683">
    <property type="entry name" value="SAM_OMT_II"/>
    <property type="match status" value="1"/>
</dbReference>
<evidence type="ECO:0000250" key="1"/>
<evidence type="ECO:0000255" key="2">
    <source>
        <dbReference type="PROSITE-ProRule" id="PRU01020"/>
    </source>
</evidence>
<reference key="1">
    <citation type="online journal article" date="1997" name="Plant Gene Register">
        <title>Nucleotide sequence of an additional member of bispecific caffeic acid/5-hydroxyferulic acid O-methyltransferase gene family in Populus tremuloides.</title>
        <authorList>
            <person name="Hu W.-J."/>
            <person name="Chiang V.L.C."/>
        </authorList>
        <locator>PGR97-035</locator>
    </citation>
    <scope>NUCLEOTIDE SEQUENCE [GENOMIC DNA]</scope>
</reference>
<sequence>MGSTGETQMSPAQILDEEANFALQLISSSVLPMVLKTAIELDLLEIMAKAGPGALLPPSDIASHLPTKNPNAPVMLDRILRLLASYSILICSLRDLPDGKVERLYGLASVCKFLTRNEDGVSVSPLCLMNQDKVLMESWYHLKDAILEGGIPFNKAYGMTAFEYHGTDPRFNKVFNKGMSVHSKMAMKKILETYKGFEGLASLVDVGGGTGAVVSTIVSKYPSIKGINFDLPHVIADAPAFPGVENVGGDMFVSVPKADAVFMKWICHDWSDEHCLTFLKNCYDALPENGKVILVECILPVAPDTSLATKGVMHVDVIMLAHNPGGKERTDREFESLARGAGFKGFEVMCCAFNTHVIEFRKKA</sequence>
<accession>Q41086</accession>
<protein>
    <recommendedName>
        <fullName>Caffeic acid 3-O-methyltransferase 2</fullName>
        <shortName>CAOMT-2</shortName>
        <shortName>COMT-2</shortName>
        <ecNumber>2.1.1.68</ecNumber>
    </recommendedName>
    <alternativeName>
        <fullName>S-adenosysl-L-methionine:caffeic acid 3-O-methyltransferase 2</fullName>
    </alternativeName>
</protein>
<keyword id="KW-0438">Lignin biosynthesis</keyword>
<keyword id="KW-0489">Methyltransferase</keyword>
<keyword id="KW-0949">S-adenosyl-L-methionine</keyword>
<keyword id="KW-0808">Transferase</keyword>
<feature type="chain" id="PRO_0000063210" description="Caffeic acid 3-O-methyltransferase 2">
    <location>
        <begin position="1"/>
        <end position="364"/>
    </location>
</feature>
<feature type="region of interest" description="Substrate binding" evidence="1">
    <location>
        <begin position="161"/>
        <end position="179"/>
    </location>
</feature>
<feature type="active site" description="Proton acceptor" evidence="2">
    <location>
        <position position="268"/>
    </location>
</feature>
<feature type="binding site" evidence="1">
    <location>
        <begin position="129"/>
        <end position="135"/>
    </location>
    <ligand>
        <name>substrate</name>
    </ligand>
</feature>
<feature type="binding site" evidence="2">
    <location>
        <position position="207"/>
    </location>
    <ligand>
        <name>S-adenosyl-L-methionine</name>
        <dbReference type="ChEBI" id="CHEBI:59789"/>
    </ligand>
</feature>
<feature type="binding site" evidence="2">
    <location>
        <position position="230"/>
    </location>
    <ligand>
        <name>S-adenosyl-L-methionine</name>
        <dbReference type="ChEBI" id="CHEBI:59789"/>
    </ligand>
</feature>
<feature type="binding site" evidence="2">
    <location>
        <position position="250"/>
    </location>
    <ligand>
        <name>S-adenosyl-L-methionine</name>
        <dbReference type="ChEBI" id="CHEBI:59789"/>
    </ligand>
</feature>
<feature type="binding site" evidence="2">
    <location>
        <position position="251"/>
    </location>
    <ligand>
        <name>S-adenosyl-L-methionine</name>
        <dbReference type="ChEBI" id="CHEBI:59789"/>
    </ligand>
</feature>
<feature type="binding site" evidence="2">
    <location>
        <position position="264"/>
    </location>
    <ligand>
        <name>S-adenosyl-L-methionine</name>
        <dbReference type="ChEBI" id="CHEBI:59789"/>
    </ligand>
</feature>